<organism>
    <name type="scientific">Methanosarcina barkeri (strain Fusaro / DSM 804)</name>
    <dbReference type="NCBI Taxonomy" id="269797"/>
    <lineage>
        <taxon>Archaea</taxon>
        <taxon>Methanobacteriati</taxon>
        <taxon>Methanobacteriota</taxon>
        <taxon>Stenosarchaea group</taxon>
        <taxon>Methanomicrobia</taxon>
        <taxon>Methanosarcinales</taxon>
        <taxon>Methanosarcinaceae</taxon>
        <taxon>Methanosarcina</taxon>
    </lineage>
</organism>
<feature type="chain" id="PRO_0000229719" description="NAD kinase">
    <location>
        <begin position="1"/>
        <end position="275"/>
    </location>
</feature>
<feature type="active site" description="Proton acceptor" evidence="1">
    <location>
        <position position="68"/>
    </location>
</feature>
<feature type="binding site" evidence="1">
    <location>
        <begin position="68"/>
        <end position="69"/>
    </location>
    <ligand>
        <name>NAD(+)</name>
        <dbReference type="ChEBI" id="CHEBI:57540"/>
    </ligand>
</feature>
<feature type="binding site" evidence="1">
    <location>
        <position position="73"/>
    </location>
    <ligand>
        <name>NAD(+)</name>
        <dbReference type="ChEBI" id="CHEBI:57540"/>
    </ligand>
</feature>
<feature type="binding site" evidence="1">
    <location>
        <begin position="136"/>
        <end position="137"/>
    </location>
    <ligand>
        <name>NAD(+)</name>
        <dbReference type="ChEBI" id="CHEBI:57540"/>
    </ligand>
</feature>
<feature type="binding site" evidence="1">
    <location>
        <position position="147"/>
    </location>
    <ligand>
        <name>NAD(+)</name>
        <dbReference type="ChEBI" id="CHEBI:57540"/>
    </ligand>
</feature>
<feature type="binding site" evidence="1">
    <location>
        <position position="164"/>
    </location>
    <ligand>
        <name>NAD(+)</name>
        <dbReference type="ChEBI" id="CHEBI:57540"/>
    </ligand>
</feature>
<feature type="binding site" evidence="1">
    <location>
        <position position="166"/>
    </location>
    <ligand>
        <name>NAD(+)</name>
        <dbReference type="ChEBI" id="CHEBI:57540"/>
    </ligand>
</feature>
<feature type="binding site" evidence="1">
    <location>
        <begin position="177"/>
        <end position="182"/>
    </location>
    <ligand>
        <name>NAD(+)</name>
        <dbReference type="ChEBI" id="CHEBI:57540"/>
    </ligand>
</feature>
<feature type="binding site" evidence="1">
    <location>
        <position position="201"/>
    </location>
    <ligand>
        <name>NAD(+)</name>
        <dbReference type="ChEBI" id="CHEBI:57540"/>
    </ligand>
</feature>
<feature type="binding site" evidence="1">
    <location>
        <position position="236"/>
    </location>
    <ligand>
        <name>NAD(+)</name>
        <dbReference type="ChEBI" id="CHEBI:57540"/>
    </ligand>
</feature>
<sequence length="275" mass="30223">MAIKKIGISARCDRPEIIGKVREILAHFSSRVQIFVATPTAEVLGMEGTPVERMREEGVELIISVGGDGTVLRNIAKMKDPLPILGINMGTLGFLVDVEPEDALETIEEVLYGFSYSDRMRVDVFLNGEMLETATNEIAIMSAKPAKIIQFEVYVGDCLLDSMRADGVVFATPTGSTAYAMSAGGPIISPRVNAIVVVPVAPFKLSSRPWVIPSDSEITIRLSAPKKEAVIAIDGQKSYRIKLDDVVKLKKSRFPARFVRISDTCFYERVQRKLT</sequence>
<comment type="function">
    <text evidence="1">Involved in the regulation of the intracellular balance of NAD and NADP, and is a key enzyme in the biosynthesis of NADP. Catalyzes specifically the phosphorylation on 2'-hydroxyl of the adenosine moiety of NAD to yield NADP.</text>
</comment>
<comment type="catalytic activity">
    <reaction evidence="1">
        <text>NAD(+) + ATP = ADP + NADP(+) + H(+)</text>
        <dbReference type="Rhea" id="RHEA:18629"/>
        <dbReference type="ChEBI" id="CHEBI:15378"/>
        <dbReference type="ChEBI" id="CHEBI:30616"/>
        <dbReference type="ChEBI" id="CHEBI:57540"/>
        <dbReference type="ChEBI" id="CHEBI:58349"/>
        <dbReference type="ChEBI" id="CHEBI:456216"/>
        <dbReference type="EC" id="2.7.1.23"/>
    </reaction>
</comment>
<comment type="cofactor">
    <cofactor evidence="1">
        <name>a divalent metal cation</name>
        <dbReference type="ChEBI" id="CHEBI:60240"/>
    </cofactor>
</comment>
<comment type="subcellular location">
    <subcellularLocation>
        <location evidence="1">Cytoplasm</location>
    </subcellularLocation>
</comment>
<comment type="similarity">
    <text evidence="1">Belongs to the NAD kinase family.</text>
</comment>
<protein>
    <recommendedName>
        <fullName evidence="1">NAD kinase</fullName>
        <ecNumber evidence="1">2.7.1.23</ecNumber>
    </recommendedName>
    <alternativeName>
        <fullName evidence="1">ATP-dependent NAD kinase</fullName>
    </alternativeName>
</protein>
<gene>
    <name evidence="1" type="primary">nadK</name>
    <name type="ordered locus">Mbar_A2191</name>
</gene>
<keyword id="KW-0067">ATP-binding</keyword>
<keyword id="KW-0963">Cytoplasm</keyword>
<keyword id="KW-0418">Kinase</keyword>
<keyword id="KW-0520">NAD</keyword>
<keyword id="KW-0521">NADP</keyword>
<keyword id="KW-0547">Nucleotide-binding</keyword>
<keyword id="KW-0808">Transferase</keyword>
<reference key="1">
    <citation type="journal article" date="2006" name="J. Bacteriol.">
        <title>The Methanosarcina barkeri genome: comparative analysis with Methanosarcina acetivorans and Methanosarcina mazei reveals extensive rearrangement within methanosarcinal genomes.</title>
        <authorList>
            <person name="Maeder D.L."/>
            <person name="Anderson I."/>
            <person name="Brettin T.S."/>
            <person name="Bruce D.C."/>
            <person name="Gilna P."/>
            <person name="Han C.S."/>
            <person name="Lapidus A."/>
            <person name="Metcalf W.W."/>
            <person name="Saunders E."/>
            <person name="Tapia R."/>
            <person name="Sowers K.R."/>
        </authorList>
    </citation>
    <scope>NUCLEOTIDE SEQUENCE [LARGE SCALE GENOMIC DNA]</scope>
    <source>
        <strain>Fusaro / DSM 804</strain>
    </source>
</reference>
<evidence type="ECO:0000255" key="1">
    <source>
        <dbReference type="HAMAP-Rule" id="MF_00361"/>
    </source>
</evidence>
<accession>Q46AH3</accession>
<name>NADK_METBF</name>
<dbReference type="EC" id="2.7.1.23" evidence="1"/>
<dbReference type="EMBL" id="CP000099">
    <property type="protein sequence ID" value="AAZ71119.1"/>
    <property type="molecule type" value="Genomic_DNA"/>
</dbReference>
<dbReference type="SMR" id="Q46AH3"/>
<dbReference type="STRING" id="269797.Mbar_A2191"/>
<dbReference type="PaxDb" id="269797-Mbar_A2191"/>
<dbReference type="KEGG" id="mba:Mbar_A2191"/>
<dbReference type="eggNOG" id="arCOG01348">
    <property type="taxonomic scope" value="Archaea"/>
</dbReference>
<dbReference type="HOGENOM" id="CLU_008831_0_2_2"/>
<dbReference type="OrthoDB" id="77798at2157"/>
<dbReference type="GO" id="GO:0005737">
    <property type="term" value="C:cytoplasm"/>
    <property type="evidence" value="ECO:0007669"/>
    <property type="project" value="UniProtKB-SubCell"/>
</dbReference>
<dbReference type="GO" id="GO:0005524">
    <property type="term" value="F:ATP binding"/>
    <property type="evidence" value="ECO:0007669"/>
    <property type="project" value="UniProtKB-KW"/>
</dbReference>
<dbReference type="GO" id="GO:0046872">
    <property type="term" value="F:metal ion binding"/>
    <property type="evidence" value="ECO:0007669"/>
    <property type="project" value="UniProtKB-UniRule"/>
</dbReference>
<dbReference type="GO" id="GO:0003951">
    <property type="term" value="F:NAD+ kinase activity"/>
    <property type="evidence" value="ECO:0007669"/>
    <property type="project" value="UniProtKB-UniRule"/>
</dbReference>
<dbReference type="GO" id="GO:0019674">
    <property type="term" value="P:NAD metabolic process"/>
    <property type="evidence" value="ECO:0007669"/>
    <property type="project" value="InterPro"/>
</dbReference>
<dbReference type="GO" id="GO:0006741">
    <property type="term" value="P:NADP biosynthetic process"/>
    <property type="evidence" value="ECO:0007669"/>
    <property type="project" value="UniProtKB-UniRule"/>
</dbReference>
<dbReference type="FunFam" id="2.60.200.30:FF:000009">
    <property type="entry name" value="Poly(P)/ATP NAD kinase"/>
    <property type="match status" value="1"/>
</dbReference>
<dbReference type="Gene3D" id="3.40.50.10330">
    <property type="entry name" value="Probable inorganic polyphosphate/atp-NAD kinase, domain 1"/>
    <property type="match status" value="1"/>
</dbReference>
<dbReference type="Gene3D" id="2.60.200.30">
    <property type="entry name" value="Probable inorganic polyphosphate/atp-NAD kinase, domain 2"/>
    <property type="match status" value="1"/>
</dbReference>
<dbReference type="HAMAP" id="MF_00361">
    <property type="entry name" value="NAD_kinase"/>
    <property type="match status" value="1"/>
</dbReference>
<dbReference type="InterPro" id="IPR017438">
    <property type="entry name" value="ATP-NAD_kinase_N"/>
</dbReference>
<dbReference type="InterPro" id="IPR017437">
    <property type="entry name" value="ATP-NAD_kinase_PpnK-typ_C"/>
</dbReference>
<dbReference type="InterPro" id="IPR016064">
    <property type="entry name" value="NAD/diacylglycerol_kinase_sf"/>
</dbReference>
<dbReference type="InterPro" id="IPR002504">
    <property type="entry name" value="NADK"/>
</dbReference>
<dbReference type="PANTHER" id="PTHR20275:SF43">
    <property type="entry name" value="BIFUNCTIONAL NADP PHOSPHATASE_NAD KINASE"/>
    <property type="match status" value="1"/>
</dbReference>
<dbReference type="PANTHER" id="PTHR20275">
    <property type="entry name" value="NAD KINASE"/>
    <property type="match status" value="1"/>
</dbReference>
<dbReference type="Pfam" id="PF01513">
    <property type="entry name" value="NAD_kinase"/>
    <property type="match status" value="1"/>
</dbReference>
<dbReference type="Pfam" id="PF20143">
    <property type="entry name" value="NAD_kinase_C"/>
    <property type="match status" value="1"/>
</dbReference>
<dbReference type="SUPFAM" id="SSF111331">
    <property type="entry name" value="NAD kinase/diacylglycerol kinase-like"/>
    <property type="match status" value="1"/>
</dbReference>
<proteinExistence type="inferred from homology"/>